<keyword id="KW-0963">Cytoplasm</keyword>
<keyword id="KW-0378">Hydrolase</keyword>
<keyword id="KW-0694">RNA-binding</keyword>
<keyword id="KW-0820">tRNA-binding</keyword>
<organism>
    <name type="scientific">Thermotoga petrophila (strain ATCC BAA-488 / DSM 13995 / JCM 10881 / RKU-1)</name>
    <dbReference type="NCBI Taxonomy" id="390874"/>
    <lineage>
        <taxon>Bacteria</taxon>
        <taxon>Thermotogati</taxon>
        <taxon>Thermotogota</taxon>
        <taxon>Thermotogae</taxon>
        <taxon>Thermotogales</taxon>
        <taxon>Thermotogaceae</taxon>
        <taxon>Thermotoga</taxon>
    </lineage>
</organism>
<accession>A5ILV6</accession>
<proteinExistence type="inferred from homology"/>
<protein>
    <recommendedName>
        <fullName evidence="1">Peptidyl-tRNA hydrolase</fullName>
        <shortName evidence="1">Pth</shortName>
        <ecNumber evidence="1">3.1.1.29</ecNumber>
    </recommendedName>
</protein>
<evidence type="ECO:0000255" key="1">
    <source>
        <dbReference type="HAMAP-Rule" id="MF_00083"/>
    </source>
</evidence>
<reference key="1">
    <citation type="submission" date="2007-05" db="EMBL/GenBank/DDBJ databases">
        <title>Complete sequence of Thermotoga petrophila RKU-1.</title>
        <authorList>
            <consortium name="US DOE Joint Genome Institute"/>
            <person name="Copeland A."/>
            <person name="Lucas S."/>
            <person name="Lapidus A."/>
            <person name="Barry K."/>
            <person name="Glavina del Rio T."/>
            <person name="Dalin E."/>
            <person name="Tice H."/>
            <person name="Pitluck S."/>
            <person name="Sims D."/>
            <person name="Brettin T."/>
            <person name="Bruce D."/>
            <person name="Detter J.C."/>
            <person name="Han C."/>
            <person name="Tapia R."/>
            <person name="Schmutz J."/>
            <person name="Larimer F."/>
            <person name="Land M."/>
            <person name="Hauser L."/>
            <person name="Kyrpides N."/>
            <person name="Mikhailova N."/>
            <person name="Nelson K."/>
            <person name="Gogarten J.P."/>
            <person name="Noll K."/>
            <person name="Richardson P."/>
        </authorList>
    </citation>
    <scope>NUCLEOTIDE SEQUENCE [LARGE SCALE GENOMIC DNA]</scope>
    <source>
        <strain>ATCC BAA-488 / DSM 13995 / JCM 10881 / RKU-1</strain>
    </source>
</reference>
<gene>
    <name evidence="1" type="primary">pth</name>
    <name type="ordered locus">Tpet_1165</name>
</gene>
<sequence>MVVVGLGNPGPRYAFTRHNVGFLFLDFLKSKDWKTEKYFAWSRIKLAGNDVALVKPLTYMNLSGLAMPHVLKFFNASPDDIIVVYDDVSLKLGRIRIRKKGSDGGHNGMKSIIQALGTQEIKRIRVGIGDKPEGMDLVDFVLGEFSDEEWIILNKVFEVMKEALEVILIEGTEKAMSIYNSLEVRV</sequence>
<name>PTH_THEP1</name>
<feature type="chain" id="PRO_1000010662" description="Peptidyl-tRNA hydrolase">
    <location>
        <begin position="1"/>
        <end position="186"/>
    </location>
</feature>
<feature type="active site" description="Proton acceptor" evidence="1">
    <location>
        <position position="18"/>
    </location>
</feature>
<feature type="binding site" evidence="1">
    <location>
        <position position="13"/>
    </location>
    <ligand>
        <name>tRNA</name>
        <dbReference type="ChEBI" id="CHEBI:17843"/>
    </ligand>
</feature>
<feature type="binding site" evidence="1">
    <location>
        <position position="59"/>
    </location>
    <ligand>
        <name>tRNA</name>
        <dbReference type="ChEBI" id="CHEBI:17843"/>
    </ligand>
</feature>
<feature type="binding site" evidence="1">
    <location>
        <position position="61"/>
    </location>
    <ligand>
        <name>tRNA</name>
        <dbReference type="ChEBI" id="CHEBI:17843"/>
    </ligand>
</feature>
<feature type="binding site" evidence="1">
    <location>
        <position position="107"/>
    </location>
    <ligand>
        <name>tRNA</name>
        <dbReference type="ChEBI" id="CHEBI:17843"/>
    </ligand>
</feature>
<feature type="site" description="Discriminates between blocked and unblocked aminoacyl-tRNA" evidence="1">
    <location>
        <position position="8"/>
    </location>
</feature>
<feature type="site" description="Stabilizes the basic form of H active site to accept a proton" evidence="1">
    <location>
        <position position="86"/>
    </location>
</feature>
<comment type="function">
    <text evidence="1">Hydrolyzes ribosome-free peptidyl-tRNAs (with 1 or more amino acids incorporated), which drop off the ribosome during protein synthesis, or as a result of ribosome stalling.</text>
</comment>
<comment type="function">
    <text evidence="1">Catalyzes the release of premature peptidyl moieties from peptidyl-tRNA molecules trapped in stalled 50S ribosomal subunits, and thus maintains levels of free tRNAs and 50S ribosomes.</text>
</comment>
<comment type="catalytic activity">
    <reaction evidence="1">
        <text>an N-acyl-L-alpha-aminoacyl-tRNA + H2O = an N-acyl-L-amino acid + a tRNA + H(+)</text>
        <dbReference type="Rhea" id="RHEA:54448"/>
        <dbReference type="Rhea" id="RHEA-COMP:10123"/>
        <dbReference type="Rhea" id="RHEA-COMP:13883"/>
        <dbReference type="ChEBI" id="CHEBI:15377"/>
        <dbReference type="ChEBI" id="CHEBI:15378"/>
        <dbReference type="ChEBI" id="CHEBI:59874"/>
        <dbReference type="ChEBI" id="CHEBI:78442"/>
        <dbReference type="ChEBI" id="CHEBI:138191"/>
        <dbReference type="EC" id="3.1.1.29"/>
    </reaction>
</comment>
<comment type="subunit">
    <text evidence="1">Monomer.</text>
</comment>
<comment type="subcellular location">
    <subcellularLocation>
        <location evidence="1">Cytoplasm</location>
    </subcellularLocation>
</comment>
<comment type="similarity">
    <text evidence="1">Belongs to the PTH family.</text>
</comment>
<dbReference type="EC" id="3.1.1.29" evidence="1"/>
<dbReference type="EMBL" id="CP000702">
    <property type="protein sequence ID" value="ABQ47179.1"/>
    <property type="molecule type" value="Genomic_DNA"/>
</dbReference>
<dbReference type="RefSeq" id="WP_011943693.1">
    <property type="nucleotide sequence ID" value="NC_009486.1"/>
</dbReference>
<dbReference type="SMR" id="A5ILV6"/>
<dbReference type="STRING" id="390874.Tpet_1165"/>
<dbReference type="KEGG" id="tpt:Tpet_1165"/>
<dbReference type="eggNOG" id="COG0193">
    <property type="taxonomic scope" value="Bacteria"/>
</dbReference>
<dbReference type="HOGENOM" id="CLU_062456_4_1_0"/>
<dbReference type="Proteomes" id="UP000006558">
    <property type="component" value="Chromosome"/>
</dbReference>
<dbReference type="GO" id="GO:0005737">
    <property type="term" value="C:cytoplasm"/>
    <property type="evidence" value="ECO:0007669"/>
    <property type="project" value="UniProtKB-SubCell"/>
</dbReference>
<dbReference type="GO" id="GO:0004045">
    <property type="term" value="F:peptidyl-tRNA hydrolase activity"/>
    <property type="evidence" value="ECO:0007669"/>
    <property type="project" value="UniProtKB-UniRule"/>
</dbReference>
<dbReference type="GO" id="GO:0000049">
    <property type="term" value="F:tRNA binding"/>
    <property type="evidence" value="ECO:0007669"/>
    <property type="project" value="UniProtKB-UniRule"/>
</dbReference>
<dbReference type="GO" id="GO:0006515">
    <property type="term" value="P:protein quality control for misfolded or incompletely synthesized proteins"/>
    <property type="evidence" value="ECO:0007669"/>
    <property type="project" value="UniProtKB-UniRule"/>
</dbReference>
<dbReference type="GO" id="GO:0072344">
    <property type="term" value="P:rescue of stalled ribosome"/>
    <property type="evidence" value="ECO:0007669"/>
    <property type="project" value="UniProtKB-UniRule"/>
</dbReference>
<dbReference type="CDD" id="cd00462">
    <property type="entry name" value="PTH"/>
    <property type="match status" value="1"/>
</dbReference>
<dbReference type="FunFam" id="3.40.50.1470:FF:000001">
    <property type="entry name" value="Peptidyl-tRNA hydrolase"/>
    <property type="match status" value="1"/>
</dbReference>
<dbReference type="Gene3D" id="3.40.50.1470">
    <property type="entry name" value="Peptidyl-tRNA hydrolase"/>
    <property type="match status" value="1"/>
</dbReference>
<dbReference type="HAMAP" id="MF_00083">
    <property type="entry name" value="Pept_tRNA_hydro_bact"/>
    <property type="match status" value="1"/>
</dbReference>
<dbReference type="InterPro" id="IPR001328">
    <property type="entry name" value="Pept_tRNA_hydro"/>
</dbReference>
<dbReference type="InterPro" id="IPR018171">
    <property type="entry name" value="Pept_tRNA_hydro_CS"/>
</dbReference>
<dbReference type="InterPro" id="IPR036416">
    <property type="entry name" value="Pept_tRNA_hydro_sf"/>
</dbReference>
<dbReference type="NCBIfam" id="TIGR00447">
    <property type="entry name" value="pth"/>
    <property type="match status" value="1"/>
</dbReference>
<dbReference type="PANTHER" id="PTHR17224">
    <property type="entry name" value="PEPTIDYL-TRNA HYDROLASE"/>
    <property type="match status" value="1"/>
</dbReference>
<dbReference type="PANTHER" id="PTHR17224:SF1">
    <property type="entry name" value="PEPTIDYL-TRNA HYDROLASE"/>
    <property type="match status" value="1"/>
</dbReference>
<dbReference type="Pfam" id="PF01195">
    <property type="entry name" value="Pept_tRNA_hydro"/>
    <property type="match status" value="1"/>
</dbReference>
<dbReference type="SUPFAM" id="SSF53178">
    <property type="entry name" value="Peptidyl-tRNA hydrolase-like"/>
    <property type="match status" value="1"/>
</dbReference>
<dbReference type="PROSITE" id="PS01195">
    <property type="entry name" value="PEPT_TRNA_HYDROL_1"/>
    <property type="match status" value="1"/>
</dbReference>
<dbReference type="PROSITE" id="PS01196">
    <property type="entry name" value="PEPT_TRNA_HYDROL_2"/>
    <property type="match status" value="1"/>
</dbReference>